<protein>
    <recommendedName>
        <fullName evidence="1">Formate--tetrahydrofolate ligase 1</fullName>
        <ecNumber evidence="1">6.3.4.3</ecNumber>
    </recommendedName>
    <alternativeName>
        <fullName evidence="1">Formyltetrahydrofolate synthetase 1</fullName>
        <shortName evidence="1">FHS 1</shortName>
        <shortName evidence="1">FTHFS 1</shortName>
    </alternativeName>
</protein>
<evidence type="ECO:0000255" key="1">
    <source>
        <dbReference type="HAMAP-Rule" id="MF_01543"/>
    </source>
</evidence>
<name>FTHS1_STRPB</name>
<accession>Q1JBM0</accession>
<comment type="catalytic activity">
    <reaction evidence="1">
        <text>(6S)-5,6,7,8-tetrahydrofolate + formate + ATP = (6R)-10-formyltetrahydrofolate + ADP + phosphate</text>
        <dbReference type="Rhea" id="RHEA:20221"/>
        <dbReference type="ChEBI" id="CHEBI:15740"/>
        <dbReference type="ChEBI" id="CHEBI:30616"/>
        <dbReference type="ChEBI" id="CHEBI:43474"/>
        <dbReference type="ChEBI" id="CHEBI:57453"/>
        <dbReference type="ChEBI" id="CHEBI:195366"/>
        <dbReference type="ChEBI" id="CHEBI:456216"/>
        <dbReference type="EC" id="6.3.4.3"/>
    </reaction>
</comment>
<comment type="pathway">
    <text evidence="1">One-carbon metabolism; tetrahydrofolate interconversion.</text>
</comment>
<comment type="similarity">
    <text evidence="1">Belongs to the formate--tetrahydrofolate ligase family.</text>
</comment>
<sequence>MKSDIEIAQSVALQPITDIVKKVGIDGDDIELYGKYKAKLSFEKMKAVEANEPGKLILVTAINPTPAGEGKSTMSIGLADALNQMGKKTMLALREPSLGPVMGIKGGAAGGGYAQVLPMEDINLHFTGDMHAITTANNALSALIDNHLQQGNDLGIDPRRIIWKRVLDLNDRALRQVIVGLGSPVNGVPREDGFDITVASEIMAILCLATDLKDLKKRLADIVVAYTYDRKPVYVRDLKVEGALTLILKDAIKPNLVQTIYGTPALIHGGPFANIAHGCNSVLATSTALRLADYTVTEAGFGADLGAEKFLNIKVPNLPKAPDAIVIVATLRALKMHGGVAKSDLAAENCEAVRLGFANLKRHVENMRQFKVPVVVAINEFVADTEAEIATLKALCEEIKVPVELASVWANGAEGGLALAKTVVRVIDQEAADYKRLYSDEDTLEEKVINIVTQIYGGKAVQFGPKAKTQLKQFAEFGWDKLPVCMAKTQYSFSDNPSLLGAPTDFDITIREFVPKTGAGFIVGLTGDVMTMPGLPKVPAAMAMDVAENGTALGLF</sequence>
<keyword id="KW-0067">ATP-binding</keyword>
<keyword id="KW-0436">Ligase</keyword>
<keyword id="KW-0547">Nucleotide-binding</keyword>
<keyword id="KW-0554">One-carbon metabolism</keyword>
<gene>
    <name evidence="1" type="primary">fhs1</name>
    <name type="ordered locus">MGAS2096_Spy0986</name>
</gene>
<feature type="chain" id="PRO_0000293059" description="Formate--tetrahydrofolate ligase 1">
    <location>
        <begin position="1"/>
        <end position="556"/>
    </location>
</feature>
<feature type="binding site" evidence="1">
    <location>
        <begin position="65"/>
        <end position="72"/>
    </location>
    <ligand>
        <name>ATP</name>
        <dbReference type="ChEBI" id="CHEBI:30616"/>
    </ligand>
</feature>
<reference key="1">
    <citation type="journal article" date="2006" name="Proc. Natl. Acad. Sci. U.S.A.">
        <title>Molecular genetic anatomy of inter- and intraserotype variation in the human bacterial pathogen group A Streptococcus.</title>
        <authorList>
            <person name="Beres S.B."/>
            <person name="Richter E.W."/>
            <person name="Nagiec M.J."/>
            <person name="Sumby P."/>
            <person name="Porcella S.F."/>
            <person name="DeLeo F.R."/>
            <person name="Musser J.M."/>
        </authorList>
    </citation>
    <scope>NUCLEOTIDE SEQUENCE [LARGE SCALE GENOMIC DNA]</scope>
    <source>
        <strain>MGAS2096</strain>
    </source>
</reference>
<dbReference type="EC" id="6.3.4.3" evidence="1"/>
<dbReference type="EMBL" id="CP000261">
    <property type="protein sequence ID" value="ABF36038.1"/>
    <property type="molecule type" value="Genomic_DNA"/>
</dbReference>
<dbReference type="SMR" id="Q1JBM0"/>
<dbReference type="KEGG" id="spj:MGAS2096_Spy0986"/>
<dbReference type="HOGENOM" id="CLU_003601_3_3_9"/>
<dbReference type="UniPathway" id="UPA00193"/>
<dbReference type="GO" id="GO:0005524">
    <property type="term" value="F:ATP binding"/>
    <property type="evidence" value="ECO:0007669"/>
    <property type="project" value="UniProtKB-UniRule"/>
</dbReference>
<dbReference type="GO" id="GO:0004329">
    <property type="term" value="F:formate-tetrahydrofolate ligase activity"/>
    <property type="evidence" value="ECO:0007669"/>
    <property type="project" value="UniProtKB-UniRule"/>
</dbReference>
<dbReference type="GO" id="GO:0035999">
    <property type="term" value="P:tetrahydrofolate interconversion"/>
    <property type="evidence" value="ECO:0007669"/>
    <property type="project" value="UniProtKB-UniRule"/>
</dbReference>
<dbReference type="CDD" id="cd00477">
    <property type="entry name" value="FTHFS"/>
    <property type="match status" value="1"/>
</dbReference>
<dbReference type="FunFam" id="3.30.1510.10:FF:000001">
    <property type="entry name" value="Formate--tetrahydrofolate ligase"/>
    <property type="match status" value="1"/>
</dbReference>
<dbReference type="FunFam" id="3.10.410.10:FF:000001">
    <property type="entry name" value="Putative formate--tetrahydrofolate ligase"/>
    <property type="match status" value="1"/>
</dbReference>
<dbReference type="Gene3D" id="3.30.1510.10">
    <property type="entry name" value="Domain 2, N(10)-formyltetrahydrofolate synthetase"/>
    <property type="match status" value="1"/>
</dbReference>
<dbReference type="Gene3D" id="3.10.410.10">
    <property type="entry name" value="Formyltetrahydrofolate synthetase, domain 3"/>
    <property type="match status" value="1"/>
</dbReference>
<dbReference type="Gene3D" id="3.40.50.300">
    <property type="entry name" value="P-loop containing nucleotide triphosphate hydrolases"/>
    <property type="match status" value="1"/>
</dbReference>
<dbReference type="HAMAP" id="MF_01543">
    <property type="entry name" value="FTHFS"/>
    <property type="match status" value="1"/>
</dbReference>
<dbReference type="InterPro" id="IPR000559">
    <property type="entry name" value="Formate_THF_ligase"/>
</dbReference>
<dbReference type="InterPro" id="IPR020628">
    <property type="entry name" value="Formate_THF_ligase_CS"/>
</dbReference>
<dbReference type="InterPro" id="IPR027417">
    <property type="entry name" value="P-loop_NTPase"/>
</dbReference>
<dbReference type="NCBIfam" id="NF010030">
    <property type="entry name" value="PRK13505.1"/>
    <property type="match status" value="1"/>
</dbReference>
<dbReference type="Pfam" id="PF01268">
    <property type="entry name" value="FTHFS"/>
    <property type="match status" value="1"/>
</dbReference>
<dbReference type="SUPFAM" id="SSF52540">
    <property type="entry name" value="P-loop containing nucleoside triphosphate hydrolases"/>
    <property type="match status" value="1"/>
</dbReference>
<dbReference type="PROSITE" id="PS00721">
    <property type="entry name" value="FTHFS_1"/>
    <property type="match status" value="1"/>
</dbReference>
<dbReference type="PROSITE" id="PS00722">
    <property type="entry name" value="FTHFS_2"/>
    <property type="match status" value="1"/>
</dbReference>
<organism>
    <name type="scientific">Streptococcus pyogenes serotype M12 (strain MGAS2096)</name>
    <dbReference type="NCBI Taxonomy" id="370553"/>
    <lineage>
        <taxon>Bacteria</taxon>
        <taxon>Bacillati</taxon>
        <taxon>Bacillota</taxon>
        <taxon>Bacilli</taxon>
        <taxon>Lactobacillales</taxon>
        <taxon>Streptococcaceae</taxon>
        <taxon>Streptococcus</taxon>
    </lineage>
</organism>
<proteinExistence type="inferred from homology"/>